<comment type="similarity">
    <text evidence="1">Belongs to the ubiquitin-conjugating enzyme family. FTS subfamily.</text>
</comment>
<comment type="caution">
    <text evidence="3">Lacks the conserved Cys residue necessary for ubiquitin-conjugating enzyme E2 activity.</text>
</comment>
<feature type="chain" id="PRO_0000379041" description="Protein crossbronx-like">
    <location>
        <begin position="1"/>
        <end position="266"/>
    </location>
</feature>
<feature type="domain" description="UBC core" evidence="1">
    <location>
        <begin position="15"/>
        <end position="178"/>
    </location>
</feature>
<feature type="region of interest" description="Disordered" evidence="2">
    <location>
        <begin position="216"/>
        <end position="266"/>
    </location>
</feature>
<dbReference type="EMBL" id="CH902619">
    <property type="protein sequence ID" value="EDV36841.1"/>
    <property type="molecule type" value="Genomic_DNA"/>
</dbReference>
<dbReference type="SMR" id="B3MGT3"/>
<dbReference type="FunCoup" id="B3MGT3">
    <property type="interactions" value="64"/>
</dbReference>
<dbReference type="STRING" id="7217.B3MGT3"/>
<dbReference type="EnsemblMetazoa" id="FBtr0117859">
    <property type="protein sequence ID" value="FBpp0116351"/>
    <property type="gene ID" value="FBgn0090192"/>
</dbReference>
<dbReference type="EnsemblMetazoa" id="XM_001959983.4">
    <property type="protein sequence ID" value="XP_001960019.1"/>
    <property type="gene ID" value="LOC6496002"/>
</dbReference>
<dbReference type="GeneID" id="6496002"/>
<dbReference type="KEGG" id="dan:6496002"/>
<dbReference type="eggNOG" id="KOG0429">
    <property type="taxonomic scope" value="Eukaryota"/>
</dbReference>
<dbReference type="HOGENOM" id="CLU_083049_2_0_1"/>
<dbReference type="InParanoid" id="B3MGT3"/>
<dbReference type="OMA" id="DQHHIWH"/>
<dbReference type="OrthoDB" id="5596422at2759"/>
<dbReference type="PhylomeDB" id="B3MGT3"/>
<dbReference type="Proteomes" id="UP000007801">
    <property type="component" value="Unassembled WGS sequence"/>
</dbReference>
<dbReference type="CDD" id="cd23814">
    <property type="entry name" value="UEV_AKTIP"/>
    <property type="match status" value="1"/>
</dbReference>
<dbReference type="Gene3D" id="3.10.110.10">
    <property type="entry name" value="Ubiquitin Conjugating Enzyme"/>
    <property type="match status" value="1"/>
</dbReference>
<dbReference type="InterPro" id="IPR000608">
    <property type="entry name" value="UBQ-conjugat_E2_core"/>
</dbReference>
<dbReference type="InterPro" id="IPR016135">
    <property type="entry name" value="UBQ-conjugating_enzyme/RWD"/>
</dbReference>
<dbReference type="Pfam" id="PF00179">
    <property type="entry name" value="UQ_con"/>
    <property type="match status" value="1"/>
</dbReference>
<dbReference type="SMART" id="SM00212">
    <property type="entry name" value="UBCc"/>
    <property type="match status" value="1"/>
</dbReference>
<dbReference type="SUPFAM" id="SSF54495">
    <property type="entry name" value="UBC-like"/>
    <property type="match status" value="1"/>
</dbReference>
<dbReference type="PROSITE" id="PS50127">
    <property type="entry name" value="UBC_2"/>
    <property type="match status" value="1"/>
</dbReference>
<reference key="1">
    <citation type="journal article" date="2007" name="Nature">
        <title>Evolution of genes and genomes on the Drosophila phylogeny.</title>
        <authorList>
            <consortium name="Drosophila 12 genomes consortium"/>
        </authorList>
    </citation>
    <scope>NUCLEOTIDE SEQUENCE [LARGE SCALE GENOMIC DNA]</scope>
    <source>
        <strain>Tucson 14024-0371.13</strain>
    </source>
</reference>
<proteinExistence type="inferred from homology"/>
<protein>
    <recommendedName>
        <fullName>Protein crossbronx-like</fullName>
    </recommendedName>
</protein>
<accession>B3MGT3</accession>
<evidence type="ECO:0000255" key="1">
    <source>
        <dbReference type="PROSITE-ProRule" id="PRU00388"/>
    </source>
</evidence>
<evidence type="ECO:0000256" key="2">
    <source>
        <dbReference type="SAM" id="MobiDB-lite"/>
    </source>
</evidence>
<evidence type="ECO:0000305" key="3"/>
<sequence length="266" mass="30629">MWYSIRNNQRMALIKQGYKILAEYRLVQDHLKNIYAIPSYASGLHWFGVIFVHSGIYAGSMFRFSILLPENFPDDTILPTVIFNAAIFHPHICPHSKSLDLGPCFKEWRKDQHHIWHLLRYIQAVFADPEGSICTGKSPSGDLVVLDEVNNLEALNMLAKSRPEYIKRIQELAISSRRHMYDKPMIEDPHYIIVEPYCAERHLRFMEQLKSPSWREATCEDDSPPAELLGHIDSSRQLDEDEANQRGKLQAATTDLQHGARCSVAQ</sequence>
<name>AKTP2_DROAN</name>
<keyword id="KW-1185">Reference proteome</keyword>
<organism>
    <name type="scientific">Drosophila ananassae</name>
    <name type="common">Fruit fly</name>
    <dbReference type="NCBI Taxonomy" id="7217"/>
    <lineage>
        <taxon>Eukaryota</taxon>
        <taxon>Metazoa</taxon>
        <taxon>Ecdysozoa</taxon>
        <taxon>Arthropoda</taxon>
        <taxon>Hexapoda</taxon>
        <taxon>Insecta</taxon>
        <taxon>Pterygota</taxon>
        <taxon>Neoptera</taxon>
        <taxon>Endopterygota</taxon>
        <taxon>Diptera</taxon>
        <taxon>Brachycera</taxon>
        <taxon>Muscomorpha</taxon>
        <taxon>Ephydroidea</taxon>
        <taxon>Drosophilidae</taxon>
        <taxon>Drosophila</taxon>
        <taxon>Sophophora</taxon>
    </lineage>
</organism>
<gene>
    <name type="ORF">GF13159</name>
</gene>